<name>DLTA_LACP3</name>
<proteinExistence type="inferred from homology"/>
<sequence>MIDNVITAIDRVAAEHPTRVAYDYEGTQYTYAQLKEGSDRLAGFFAETLPEHEPIIVYGGQTFDMVEVFLGLSKSGHAYIPIDTHSPNERITQVQDVAHTPAIIEVAPLPIAVPDVQIIRAPALHEAEKTHAPISSLQHAVVGDDNYYIIFTSGTTGKPKGVQISHDNLLSYVNWNISDFGLKEGVVAMSQPPYSFDLSVMDLYPTLVLGGTLKALPKEVTDNFKTLFATLPKLGLNEWVSTPSFAEIALLDPNFNQDNYPDLTHFLFCGEELVNKTAQELITRFPKATVYNTYGPTETTVAVTGMAITQDIVDQYPRLPIGFAKPDTEIFVVDEQGNQVSAGTEGELMIVGPSVSKGYLNNPEKTAKAFFNVGSQRGYRSGDLATMTEDGMIFYRGRTDFQVKLHGYRIELEDVDHNLNQVSYIKQASTVPRYNKDHKVAQLIAFAVAKPNDFESDMKLTQAVKAELGKMVMEYMIPQRIIYRDKLPLTANGKVDRKALIAEVNH</sequence>
<gene>
    <name evidence="1" type="primary">dltA</name>
    <name type="ordered locus">LSEI_0794</name>
</gene>
<reference key="1">
    <citation type="journal article" date="2006" name="Proc. Natl. Acad. Sci. U.S.A.">
        <title>Comparative genomics of the lactic acid bacteria.</title>
        <authorList>
            <person name="Makarova K.S."/>
            <person name="Slesarev A."/>
            <person name="Wolf Y.I."/>
            <person name="Sorokin A."/>
            <person name="Mirkin B."/>
            <person name="Koonin E.V."/>
            <person name="Pavlov A."/>
            <person name="Pavlova N."/>
            <person name="Karamychev V."/>
            <person name="Polouchine N."/>
            <person name="Shakhova V."/>
            <person name="Grigoriev I."/>
            <person name="Lou Y."/>
            <person name="Rohksar D."/>
            <person name="Lucas S."/>
            <person name="Huang K."/>
            <person name="Goodstein D.M."/>
            <person name="Hawkins T."/>
            <person name="Plengvidhya V."/>
            <person name="Welker D."/>
            <person name="Hughes J."/>
            <person name="Goh Y."/>
            <person name="Benson A."/>
            <person name="Baldwin K."/>
            <person name="Lee J.-H."/>
            <person name="Diaz-Muniz I."/>
            <person name="Dosti B."/>
            <person name="Smeianov V."/>
            <person name="Wechter W."/>
            <person name="Barabote R."/>
            <person name="Lorca G."/>
            <person name="Altermann E."/>
            <person name="Barrangou R."/>
            <person name="Ganesan B."/>
            <person name="Xie Y."/>
            <person name="Rawsthorne H."/>
            <person name="Tamir D."/>
            <person name="Parker C."/>
            <person name="Breidt F."/>
            <person name="Broadbent J.R."/>
            <person name="Hutkins R."/>
            <person name="O'Sullivan D."/>
            <person name="Steele J."/>
            <person name="Unlu G."/>
            <person name="Saier M.H. Jr."/>
            <person name="Klaenhammer T."/>
            <person name="Richardson P."/>
            <person name="Kozyavkin S."/>
            <person name="Weimer B.C."/>
            <person name="Mills D.A."/>
        </authorList>
    </citation>
    <scope>NUCLEOTIDE SEQUENCE [LARGE SCALE GENOMIC DNA]</scope>
    <source>
        <strain>ATCC 334 / BCRC 17002 / CCUG 31169 / CIP 107868 / KCTC 3260 / NRRL B-441</strain>
    </source>
</reference>
<feature type="chain" id="PRO_1000025530" description="D-alanine--D-alanyl carrier protein ligase">
    <location>
        <begin position="1"/>
        <end position="506"/>
    </location>
</feature>
<feature type="binding site" evidence="1">
    <location>
        <begin position="152"/>
        <end position="153"/>
    </location>
    <ligand>
        <name>ATP</name>
        <dbReference type="ChEBI" id="CHEBI:30616"/>
    </ligand>
</feature>
<feature type="binding site" evidence="1">
    <location>
        <position position="197"/>
    </location>
    <ligand>
        <name>D-alanine</name>
        <dbReference type="ChEBI" id="CHEBI:57416"/>
    </ligand>
</feature>
<feature type="binding site" evidence="1">
    <location>
        <begin position="292"/>
        <end position="297"/>
    </location>
    <ligand>
        <name>ATP</name>
        <dbReference type="ChEBI" id="CHEBI:30616"/>
    </ligand>
</feature>
<feature type="binding site" evidence="1">
    <location>
        <position position="301"/>
    </location>
    <ligand>
        <name>D-alanine</name>
        <dbReference type="ChEBI" id="CHEBI:57416"/>
    </ligand>
</feature>
<feature type="binding site" evidence="1">
    <location>
        <position position="383"/>
    </location>
    <ligand>
        <name>ATP</name>
        <dbReference type="ChEBI" id="CHEBI:30616"/>
    </ligand>
</feature>
<feature type="binding site" evidence="1">
    <location>
        <begin position="395"/>
        <end position="398"/>
    </location>
    <ligand>
        <name>ATP</name>
        <dbReference type="ChEBI" id="CHEBI:30616"/>
    </ligand>
</feature>
<feature type="binding site" evidence="1">
    <location>
        <position position="494"/>
    </location>
    <ligand>
        <name>ATP</name>
        <dbReference type="ChEBI" id="CHEBI:30616"/>
    </ligand>
</feature>
<feature type="binding site" evidence="1">
    <location>
        <position position="494"/>
    </location>
    <ligand>
        <name>D-alanine</name>
        <dbReference type="ChEBI" id="CHEBI:57416"/>
    </ligand>
</feature>
<protein>
    <recommendedName>
        <fullName evidence="1">D-alanine--D-alanyl carrier protein ligase</fullName>
        <shortName evidence="1">DCL</shortName>
        <ecNumber evidence="1">6.2.1.54</ecNumber>
    </recommendedName>
    <alternativeName>
        <fullName evidence="1">D-alanine--poly(phosphoribitol) ligase subunit 1</fullName>
    </alternativeName>
    <alternativeName>
        <fullName evidence="1">D-alanine-activating enzyme</fullName>
        <shortName evidence="1">DAE</shortName>
    </alternativeName>
</protein>
<accession>Q03AZ2</accession>
<keyword id="KW-0067">ATP-binding</keyword>
<keyword id="KW-0963">Cytoplasm</keyword>
<keyword id="KW-0436">Ligase</keyword>
<keyword id="KW-0547">Nucleotide-binding</keyword>
<keyword id="KW-1185">Reference proteome</keyword>
<dbReference type="EC" id="6.2.1.54" evidence="1"/>
<dbReference type="EMBL" id="CP000423">
    <property type="protein sequence ID" value="ABJ69630.1"/>
    <property type="molecule type" value="Genomic_DNA"/>
</dbReference>
<dbReference type="RefSeq" id="WP_011674281.1">
    <property type="nucleotide sequence ID" value="NC_008526.1"/>
</dbReference>
<dbReference type="RefSeq" id="YP_806072.1">
    <property type="nucleotide sequence ID" value="NC_008526.1"/>
</dbReference>
<dbReference type="SMR" id="Q03AZ2"/>
<dbReference type="STRING" id="321967.LSEI_0794"/>
<dbReference type="PaxDb" id="321967-LSEI_0794"/>
<dbReference type="KEGG" id="lca:LSEI_0794"/>
<dbReference type="PATRIC" id="fig|321967.11.peg.795"/>
<dbReference type="HOGENOM" id="CLU_000022_2_12_9"/>
<dbReference type="UniPathway" id="UPA00556"/>
<dbReference type="Proteomes" id="UP000001651">
    <property type="component" value="Chromosome"/>
</dbReference>
<dbReference type="GO" id="GO:0005737">
    <property type="term" value="C:cytoplasm"/>
    <property type="evidence" value="ECO:0007669"/>
    <property type="project" value="UniProtKB-SubCell"/>
</dbReference>
<dbReference type="GO" id="GO:0005524">
    <property type="term" value="F:ATP binding"/>
    <property type="evidence" value="ECO:0007669"/>
    <property type="project" value="UniProtKB-KW"/>
</dbReference>
<dbReference type="GO" id="GO:0047473">
    <property type="term" value="F:D-alanine [D-alanyl carrier protein] ligase activity"/>
    <property type="evidence" value="ECO:0007669"/>
    <property type="project" value="UniProtKB-UniRule"/>
</dbReference>
<dbReference type="GO" id="GO:0070395">
    <property type="term" value="P:lipoteichoic acid biosynthetic process"/>
    <property type="evidence" value="ECO:0007669"/>
    <property type="project" value="UniProtKB-UniRule"/>
</dbReference>
<dbReference type="CDD" id="cd05945">
    <property type="entry name" value="DltA"/>
    <property type="match status" value="1"/>
</dbReference>
<dbReference type="FunFam" id="3.30.300.30:FF:000012">
    <property type="entry name" value="D-alanine--D-alanyl carrier protein ligase"/>
    <property type="match status" value="1"/>
</dbReference>
<dbReference type="Gene3D" id="3.30.300.30">
    <property type="match status" value="1"/>
</dbReference>
<dbReference type="Gene3D" id="3.40.50.12780">
    <property type="entry name" value="N-terminal domain of ligase-like"/>
    <property type="match status" value="1"/>
</dbReference>
<dbReference type="HAMAP" id="MF_00593">
    <property type="entry name" value="DltA"/>
    <property type="match status" value="1"/>
</dbReference>
<dbReference type="InterPro" id="IPR010071">
    <property type="entry name" value="AA_adenyl_dom"/>
</dbReference>
<dbReference type="InterPro" id="IPR025110">
    <property type="entry name" value="AMP-bd_C"/>
</dbReference>
<dbReference type="InterPro" id="IPR045851">
    <property type="entry name" value="AMP-bd_C_sf"/>
</dbReference>
<dbReference type="InterPro" id="IPR020845">
    <property type="entry name" value="AMP-binding_CS"/>
</dbReference>
<dbReference type="InterPro" id="IPR000873">
    <property type="entry name" value="AMP-dep_synth/lig_dom"/>
</dbReference>
<dbReference type="InterPro" id="IPR042099">
    <property type="entry name" value="ANL_N_sf"/>
</dbReference>
<dbReference type="InterPro" id="IPR010072">
    <property type="entry name" value="DltA"/>
</dbReference>
<dbReference type="InterPro" id="IPR044507">
    <property type="entry name" value="DltA-like"/>
</dbReference>
<dbReference type="NCBIfam" id="TIGR01733">
    <property type="entry name" value="AA-adenyl-dom"/>
    <property type="match status" value="1"/>
</dbReference>
<dbReference type="NCBIfam" id="TIGR01734">
    <property type="entry name" value="D-ala-DACP-lig"/>
    <property type="match status" value="1"/>
</dbReference>
<dbReference type="NCBIfam" id="NF003417">
    <property type="entry name" value="PRK04813.1"/>
    <property type="match status" value="1"/>
</dbReference>
<dbReference type="PANTHER" id="PTHR45398">
    <property type="match status" value="1"/>
</dbReference>
<dbReference type="PANTHER" id="PTHR45398:SF1">
    <property type="entry name" value="ENZYME, PUTATIVE (JCVI)-RELATED"/>
    <property type="match status" value="1"/>
</dbReference>
<dbReference type="Pfam" id="PF00501">
    <property type="entry name" value="AMP-binding"/>
    <property type="match status" value="1"/>
</dbReference>
<dbReference type="Pfam" id="PF13193">
    <property type="entry name" value="AMP-binding_C"/>
    <property type="match status" value="1"/>
</dbReference>
<dbReference type="SUPFAM" id="SSF56801">
    <property type="entry name" value="Acetyl-CoA synthetase-like"/>
    <property type="match status" value="1"/>
</dbReference>
<dbReference type="PROSITE" id="PS00455">
    <property type="entry name" value="AMP_BINDING"/>
    <property type="match status" value="1"/>
</dbReference>
<organism>
    <name type="scientific">Lacticaseibacillus paracasei (strain ATCC 334 / BCRC 17002 / CCUG 31169 / CIP 107868 / KCTC 3260 / NRRL B-441)</name>
    <name type="common">Lactobacillus paracasei</name>
    <dbReference type="NCBI Taxonomy" id="321967"/>
    <lineage>
        <taxon>Bacteria</taxon>
        <taxon>Bacillati</taxon>
        <taxon>Bacillota</taxon>
        <taxon>Bacilli</taxon>
        <taxon>Lactobacillales</taxon>
        <taxon>Lactobacillaceae</taxon>
        <taxon>Lacticaseibacillus</taxon>
    </lineage>
</organism>
<comment type="function">
    <text evidence="1">Catalyzes the first step in the D-alanylation of lipoteichoic acid (LTA), the activation of D-alanine and its transfer onto the D-alanyl carrier protein (Dcp) DltC. In an ATP-dependent two-step reaction, forms a high energy D-alanyl-AMP intermediate, followed by transfer of the D-alanyl residue as a thiol ester to the phosphopantheinyl prosthetic group of the Dcp. D-alanylation of LTA plays an important role in modulating the properties of the cell wall in Gram-positive bacteria, influencing the net charge of the cell wall.</text>
</comment>
<comment type="catalytic activity">
    <reaction evidence="1">
        <text>holo-[D-alanyl-carrier protein] + D-alanine + ATP = D-alanyl-[D-alanyl-carrier protein] + AMP + diphosphate</text>
        <dbReference type="Rhea" id="RHEA:55132"/>
        <dbReference type="Rhea" id="RHEA-COMP:14102"/>
        <dbReference type="Rhea" id="RHEA-COMP:14103"/>
        <dbReference type="ChEBI" id="CHEBI:30616"/>
        <dbReference type="ChEBI" id="CHEBI:33019"/>
        <dbReference type="ChEBI" id="CHEBI:57416"/>
        <dbReference type="ChEBI" id="CHEBI:64479"/>
        <dbReference type="ChEBI" id="CHEBI:138620"/>
        <dbReference type="ChEBI" id="CHEBI:456215"/>
        <dbReference type="EC" id="6.2.1.54"/>
    </reaction>
</comment>
<comment type="pathway">
    <text evidence="1">Cell wall biogenesis; lipoteichoic acid biosynthesis.</text>
</comment>
<comment type="subcellular location">
    <subcellularLocation>
        <location evidence="1">Cytoplasm</location>
    </subcellularLocation>
</comment>
<comment type="similarity">
    <text evidence="1">Belongs to the ATP-dependent AMP-binding enzyme family. DltA subfamily.</text>
</comment>
<evidence type="ECO:0000255" key="1">
    <source>
        <dbReference type="HAMAP-Rule" id="MF_00593"/>
    </source>
</evidence>